<organism>
    <name type="scientific">Brevibacillus brevis (strain 47 / JCM 6285 / NBRC 100599)</name>
    <dbReference type="NCBI Taxonomy" id="358681"/>
    <lineage>
        <taxon>Bacteria</taxon>
        <taxon>Bacillati</taxon>
        <taxon>Bacillota</taxon>
        <taxon>Bacilli</taxon>
        <taxon>Bacillales</taxon>
        <taxon>Paenibacillaceae</taxon>
        <taxon>Brevibacillus</taxon>
    </lineage>
</organism>
<reference key="1">
    <citation type="submission" date="2005-03" db="EMBL/GenBank/DDBJ databases">
        <title>Brevibacillus brevis strain 47, complete genome.</title>
        <authorList>
            <person name="Hosoyama A."/>
            <person name="Yamada R."/>
            <person name="Hongo Y."/>
            <person name="Terui Y."/>
            <person name="Ankai A."/>
            <person name="Masuyama W."/>
            <person name="Sekiguchi M."/>
            <person name="Takeda T."/>
            <person name="Asano K."/>
            <person name="Ohji S."/>
            <person name="Ichikawa N."/>
            <person name="Narita S."/>
            <person name="Aoki N."/>
            <person name="Miura H."/>
            <person name="Matsushita S."/>
            <person name="Sekigawa T."/>
            <person name="Yamagata H."/>
            <person name="Yoshikawa H."/>
            <person name="Udaka S."/>
            <person name="Tanikawa S."/>
            <person name="Fujita N."/>
        </authorList>
    </citation>
    <scope>NUCLEOTIDE SEQUENCE [LARGE SCALE GENOMIC DNA]</scope>
    <source>
        <strain>47 / JCM 6285 / NBRC 100599</strain>
    </source>
</reference>
<name>HIS8_BREBN</name>
<proteinExistence type="inferred from homology"/>
<accession>C0ZCE7</accession>
<gene>
    <name evidence="1" type="primary">hisC</name>
    <name type="ordered locus">BBR47_24790</name>
</gene>
<sequence>MQPKQRILNAPVYQPGKPIDDVKREFGLTEVIKLASNENPFGSSPKAKAAISEQLDNLALYPDGASLNLRWDLADFLGVKPSQLFFGNGSDEILLMISRAFLSEGTNAVMATQTFSQYRSNGIIEGADLIEVPLKDGVHDLEAMAAAINEQTKVVWVCNPNNPSGTIVTTSELEAFMKKTPKDVLVVLDEAYYEYVVDPEYPQTVPMLAEYPNLIILRTFSKIYGLAALRIGYGIASEELISSLEHVREPFNTGTLGQVAARAALKDQEFVKSCRDRNREGMKQFTDSFDEWGLSYYPSQTNFILVDLKMDSDEVFKKLLSQGIIVRSGNALGFPGFQRITIGTKEQNDKILSVLKEIVTGALK</sequence>
<keyword id="KW-0028">Amino-acid biosynthesis</keyword>
<keyword id="KW-0032">Aminotransferase</keyword>
<keyword id="KW-0368">Histidine biosynthesis</keyword>
<keyword id="KW-0663">Pyridoxal phosphate</keyword>
<keyword id="KW-1185">Reference proteome</keyword>
<keyword id="KW-0808">Transferase</keyword>
<comment type="catalytic activity">
    <reaction evidence="1">
        <text>L-histidinol phosphate + 2-oxoglutarate = 3-(imidazol-4-yl)-2-oxopropyl phosphate + L-glutamate</text>
        <dbReference type="Rhea" id="RHEA:23744"/>
        <dbReference type="ChEBI" id="CHEBI:16810"/>
        <dbReference type="ChEBI" id="CHEBI:29985"/>
        <dbReference type="ChEBI" id="CHEBI:57766"/>
        <dbReference type="ChEBI" id="CHEBI:57980"/>
        <dbReference type="EC" id="2.6.1.9"/>
    </reaction>
</comment>
<comment type="cofactor">
    <cofactor evidence="1">
        <name>pyridoxal 5'-phosphate</name>
        <dbReference type="ChEBI" id="CHEBI:597326"/>
    </cofactor>
</comment>
<comment type="pathway">
    <text evidence="1">Amino-acid biosynthesis; L-histidine biosynthesis; L-histidine from 5-phospho-alpha-D-ribose 1-diphosphate: step 7/9.</text>
</comment>
<comment type="subunit">
    <text evidence="1">Homodimer.</text>
</comment>
<comment type="similarity">
    <text evidence="1">Belongs to the class-II pyridoxal-phosphate-dependent aminotransferase family. Histidinol-phosphate aminotransferase subfamily.</text>
</comment>
<protein>
    <recommendedName>
        <fullName evidence="1">Histidinol-phosphate aminotransferase</fullName>
        <ecNumber evidence="1">2.6.1.9</ecNumber>
    </recommendedName>
    <alternativeName>
        <fullName evidence="1">Imidazole acetol-phosphate transaminase</fullName>
    </alternativeName>
</protein>
<evidence type="ECO:0000255" key="1">
    <source>
        <dbReference type="HAMAP-Rule" id="MF_01023"/>
    </source>
</evidence>
<dbReference type="EC" id="2.6.1.9" evidence="1"/>
<dbReference type="EMBL" id="AP008955">
    <property type="protein sequence ID" value="BAH43456.1"/>
    <property type="molecule type" value="Genomic_DNA"/>
</dbReference>
<dbReference type="RefSeq" id="WP_012686163.1">
    <property type="nucleotide sequence ID" value="NC_012491.1"/>
</dbReference>
<dbReference type="SMR" id="C0ZCE7"/>
<dbReference type="STRING" id="358681.BBR47_24790"/>
<dbReference type="KEGG" id="bbe:BBR47_24790"/>
<dbReference type="eggNOG" id="COG0079">
    <property type="taxonomic scope" value="Bacteria"/>
</dbReference>
<dbReference type="HOGENOM" id="CLU_017584_3_3_9"/>
<dbReference type="UniPathway" id="UPA00031">
    <property type="reaction ID" value="UER00012"/>
</dbReference>
<dbReference type="Proteomes" id="UP000001877">
    <property type="component" value="Chromosome"/>
</dbReference>
<dbReference type="GO" id="GO:0004400">
    <property type="term" value="F:histidinol-phosphate transaminase activity"/>
    <property type="evidence" value="ECO:0007669"/>
    <property type="project" value="UniProtKB-UniRule"/>
</dbReference>
<dbReference type="GO" id="GO:0030170">
    <property type="term" value="F:pyridoxal phosphate binding"/>
    <property type="evidence" value="ECO:0007669"/>
    <property type="project" value="InterPro"/>
</dbReference>
<dbReference type="GO" id="GO:0000105">
    <property type="term" value="P:L-histidine biosynthetic process"/>
    <property type="evidence" value="ECO:0007669"/>
    <property type="project" value="UniProtKB-UniRule"/>
</dbReference>
<dbReference type="CDD" id="cd00609">
    <property type="entry name" value="AAT_like"/>
    <property type="match status" value="1"/>
</dbReference>
<dbReference type="Gene3D" id="3.90.1150.10">
    <property type="entry name" value="Aspartate Aminotransferase, domain 1"/>
    <property type="match status" value="1"/>
</dbReference>
<dbReference type="Gene3D" id="3.40.640.10">
    <property type="entry name" value="Type I PLP-dependent aspartate aminotransferase-like (Major domain)"/>
    <property type="match status" value="1"/>
</dbReference>
<dbReference type="HAMAP" id="MF_01023">
    <property type="entry name" value="HisC_aminotrans_2"/>
    <property type="match status" value="1"/>
</dbReference>
<dbReference type="InterPro" id="IPR004839">
    <property type="entry name" value="Aminotransferase_I/II_large"/>
</dbReference>
<dbReference type="InterPro" id="IPR005861">
    <property type="entry name" value="HisP_aminotrans"/>
</dbReference>
<dbReference type="InterPro" id="IPR050106">
    <property type="entry name" value="HistidinolP_aminotransfase"/>
</dbReference>
<dbReference type="InterPro" id="IPR015424">
    <property type="entry name" value="PyrdxlP-dep_Trfase"/>
</dbReference>
<dbReference type="InterPro" id="IPR015421">
    <property type="entry name" value="PyrdxlP-dep_Trfase_major"/>
</dbReference>
<dbReference type="InterPro" id="IPR015422">
    <property type="entry name" value="PyrdxlP-dep_Trfase_small"/>
</dbReference>
<dbReference type="NCBIfam" id="TIGR01141">
    <property type="entry name" value="hisC"/>
    <property type="match status" value="1"/>
</dbReference>
<dbReference type="PANTHER" id="PTHR43643:SF3">
    <property type="entry name" value="HISTIDINOL-PHOSPHATE AMINOTRANSFERASE"/>
    <property type="match status" value="1"/>
</dbReference>
<dbReference type="PANTHER" id="PTHR43643">
    <property type="entry name" value="HISTIDINOL-PHOSPHATE AMINOTRANSFERASE 2"/>
    <property type="match status" value="1"/>
</dbReference>
<dbReference type="Pfam" id="PF00155">
    <property type="entry name" value="Aminotran_1_2"/>
    <property type="match status" value="1"/>
</dbReference>
<dbReference type="SUPFAM" id="SSF53383">
    <property type="entry name" value="PLP-dependent transferases"/>
    <property type="match status" value="1"/>
</dbReference>
<feature type="chain" id="PRO_1000149083" description="Histidinol-phosphate aminotransferase">
    <location>
        <begin position="1"/>
        <end position="364"/>
    </location>
</feature>
<feature type="modified residue" description="N6-(pyridoxal phosphate)lysine" evidence="1">
    <location>
        <position position="222"/>
    </location>
</feature>